<name>RS5_CHLPM</name>
<accession>A4SCS6</accession>
<feature type="chain" id="PRO_1000140882" description="Small ribosomal subunit protein uS5">
    <location>
        <begin position="1"/>
        <end position="172"/>
    </location>
</feature>
<feature type="domain" description="S5 DRBM" evidence="1">
    <location>
        <begin position="16"/>
        <end position="79"/>
    </location>
</feature>
<organism>
    <name type="scientific">Chlorobium phaeovibrioides (strain DSM 265 / 1930)</name>
    <name type="common">Prosthecochloris vibrioformis (strain DSM 265)</name>
    <dbReference type="NCBI Taxonomy" id="290318"/>
    <lineage>
        <taxon>Bacteria</taxon>
        <taxon>Pseudomonadati</taxon>
        <taxon>Chlorobiota</taxon>
        <taxon>Chlorobiia</taxon>
        <taxon>Chlorobiales</taxon>
        <taxon>Chlorobiaceae</taxon>
        <taxon>Chlorobium/Pelodictyon group</taxon>
        <taxon>Chlorobium</taxon>
    </lineage>
</organism>
<sequence>MSKTSAKSIRPGELNLKEKLVHINRTAKVVKGGKRFGFNAIVVVGDKEGHVGYGLGKANEVQDAIAKGVEDGKKNVVKVPIIKGTIPHQIIAKYGSAKVLMKPATPGTGLIAGGAVRAVLEMAGVRDVLTKSLGSSNPHNVVKAAIKGLKSISDANDVAERRSKSLTEVFES</sequence>
<keyword id="KW-0687">Ribonucleoprotein</keyword>
<keyword id="KW-0689">Ribosomal protein</keyword>
<keyword id="KW-0694">RNA-binding</keyword>
<keyword id="KW-0699">rRNA-binding</keyword>
<protein>
    <recommendedName>
        <fullName evidence="1">Small ribosomal subunit protein uS5</fullName>
    </recommendedName>
    <alternativeName>
        <fullName evidence="2">30S ribosomal protein S5</fullName>
    </alternativeName>
</protein>
<reference key="1">
    <citation type="submission" date="2007-03" db="EMBL/GenBank/DDBJ databases">
        <title>Complete sequence of Prosthecochloris vibrioformis DSM 265.</title>
        <authorList>
            <consortium name="US DOE Joint Genome Institute"/>
            <person name="Copeland A."/>
            <person name="Lucas S."/>
            <person name="Lapidus A."/>
            <person name="Barry K."/>
            <person name="Detter J.C."/>
            <person name="Glavina del Rio T."/>
            <person name="Hammon N."/>
            <person name="Israni S."/>
            <person name="Pitluck S."/>
            <person name="Schmutz J."/>
            <person name="Larimer F."/>
            <person name="Land M."/>
            <person name="Hauser L."/>
            <person name="Mikhailova N."/>
            <person name="Li T."/>
            <person name="Overmann J."/>
            <person name="Schuster S.C."/>
            <person name="Bryant D.A."/>
            <person name="Richardson P."/>
        </authorList>
    </citation>
    <scope>NUCLEOTIDE SEQUENCE [LARGE SCALE GENOMIC DNA]</scope>
    <source>
        <strain>DSM 265 / 1930</strain>
    </source>
</reference>
<comment type="function">
    <text evidence="1">With S4 and S12 plays an important role in translational accuracy.</text>
</comment>
<comment type="function">
    <text evidence="1">Located at the back of the 30S subunit body where it stabilizes the conformation of the head with respect to the body.</text>
</comment>
<comment type="subunit">
    <text evidence="1">Part of the 30S ribosomal subunit. Contacts proteins S4 and S8.</text>
</comment>
<comment type="domain">
    <text>The N-terminal domain interacts with the head of the 30S subunit; the C-terminal domain interacts with the body and contacts protein S4. The interaction surface between S4 and S5 is involved in control of translational fidelity.</text>
</comment>
<comment type="similarity">
    <text evidence="1">Belongs to the universal ribosomal protein uS5 family.</text>
</comment>
<proteinExistence type="inferred from homology"/>
<dbReference type="EMBL" id="CP000607">
    <property type="protein sequence ID" value="ABP36285.1"/>
    <property type="molecule type" value="Genomic_DNA"/>
</dbReference>
<dbReference type="SMR" id="A4SCS6"/>
<dbReference type="STRING" id="290318.Cvib_0263"/>
<dbReference type="KEGG" id="pvi:Cvib_0263"/>
<dbReference type="eggNOG" id="COG0098">
    <property type="taxonomic scope" value="Bacteria"/>
</dbReference>
<dbReference type="HOGENOM" id="CLU_065898_2_2_10"/>
<dbReference type="OrthoDB" id="9809045at2"/>
<dbReference type="GO" id="GO:0015935">
    <property type="term" value="C:small ribosomal subunit"/>
    <property type="evidence" value="ECO:0007669"/>
    <property type="project" value="InterPro"/>
</dbReference>
<dbReference type="GO" id="GO:0019843">
    <property type="term" value="F:rRNA binding"/>
    <property type="evidence" value="ECO:0007669"/>
    <property type="project" value="UniProtKB-UniRule"/>
</dbReference>
<dbReference type="GO" id="GO:0003735">
    <property type="term" value="F:structural constituent of ribosome"/>
    <property type="evidence" value="ECO:0007669"/>
    <property type="project" value="InterPro"/>
</dbReference>
<dbReference type="GO" id="GO:0006412">
    <property type="term" value="P:translation"/>
    <property type="evidence" value="ECO:0007669"/>
    <property type="project" value="UniProtKB-UniRule"/>
</dbReference>
<dbReference type="FunFam" id="3.30.160.20:FF:000001">
    <property type="entry name" value="30S ribosomal protein S5"/>
    <property type="match status" value="1"/>
</dbReference>
<dbReference type="FunFam" id="3.30.230.10:FF:000002">
    <property type="entry name" value="30S ribosomal protein S5"/>
    <property type="match status" value="1"/>
</dbReference>
<dbReference type="Gene3D" id="3.30.160.20">
    <property type="match status" value="1"/>
</dbReference>
<dbReference type="Gene3D" id="3.30.230.10">
    <property type="match status" value="1"/>
</dbReference>
<dbReference type="HAMAP" id="MF_01307_B">
    <property type="entry name" value="Ribosomal_uS5_B"/>
    <property type="match status" value="1"/>
</dbReference>
<dbReference type="InterPro" id="IPR020568">
    <property type="entry name" value="Ribosomal_Su5_D2-typ_SF"/>
</dbReference>
<dbReference type="InterPro" id="IPR000851">
    <property type="entry name" value="Ribosomal_uS5"/>
</dbReference>
<dbReference type="InterPro" id="IPR005712">
    <property type="entry name" value="Ribosomal_uS5_bac-type"/>
</dbReference>
<dbReference type="InterPro" id="IPR005324">
    <property type="entry name" value="Ribosomal_uS5_C"/>
</dbReference>
<dbReference type="InterPro" id="IPR013810">
    <property type="entry name" value="Ribosomal_uS5_N"/>
</dbReference>
<dbReference type="InterPro" id="IPR018192">
    <property type="entry name" value="Ribosomal_uS5_N_CS"/>
</dbReference>
<dbReference type="InterPro" id="IPR014721">
    <property type="entry name" value="Ribsml_uS5_D2-typ_fold_subgr"/>
</dbReference>
<dbReference type="NCBIfam" id="TIGR01021">
    <property type="entry name" value="rpsE_bact"/>
    <property type="match status" value="1"/>
</dbReference>
<dbReference type="PANTHER" id="PTHR48277">
    <property type="entry name" value="MITOCHONDRIAL RIBOSOMAL PROTEIN S5"/>
    <property type="match status" value="1"/>
</dbReference>
<dbReference type="PANTHER" id="PTHR48277:SF1">
    <property type="entry name" value="MITOCHONDRIAL RIBOSOMAL PROTEIN S5"/>
    <property type="match status" value="1"/>
</dbReference>
<dbReference type="Pfam" id="PF00333">
    <property type="entry name" value="Ribosomal_S5"/>
    <property type="match status" value="1"/>
</dbReference>
<dbReference type="Pfam" id="PF03719">
    <property type="entry name" value="Ribosomal_S5_C"/>
    <property type="match status" value="1"/>
</dbReference>
<dbReference type="SUPFAM" id="SSF54768">
    <property type="entry name" value="dsRNA-binding domain-like"/>
    <property type="match status" value="1"/>
</dbReference>
<dbReference type="SUPFAM" id="SSF54211">
    <property type="entry name" value="Ribosomal protein S5 domain 2-like"/>
    <property type="match status" value="1"/>
</dbReference>
<dbReference type="PROSITE" id="PS00585">
    <property type="entry name" value="RIBOSOMAL_S5"/>
    <property type="match status" value="1"/>
</dbReference>
<dbReference type="PROSITE" id="PS50881">
    <property type="entry name" value="S5_DSRBD"/>
    <property type="match status" value="1"/>
</dbReference>
<gene>
    <name evidence="1" type="primary">rpsE</name>
    <name type="ordered locus">Cvib_0263</name>
</gene>
<evidence type="ECO:0000255" key="1">
    <source>
        <dbReference type="HAMAP-Rule" id="MF_01307"/>
    </source>
</evidence>
<evidence type="ECO:0000305" key="2"/>